<accession>Q9TTH8</accession>
<accession>O97701</accession>
<name>CAN3_SHEEP</name>
<organism>
    <name type="scientific">Ovis aries</name>
    <name type="common">Sheep</name>
    <dbReference type="NCBI Taxonomy" id="9940"/>
    <lineage>
        <taxon>Eukaryota</taxon>
        <taxon>Metazoa</taxon>
        <taxon>Chordata</taxon>
        <taxon>Craniata</taxon>
        <taxon>Vertebrata</taxon>
        <taxon>Euteleostomi</taxon>
        <taxon>Mammalia</taxon>
        <taxon>Eutheria</taxon>
        <taxon>Laurasiatheria</taxon>
        <taxon>Artiodactyla</taxon>
        <taxon>Ruminantia</taxon>
        <taxon>Pecora</taxon>
        <taxon>Bovidae</taxon>
        <taxon>Caprinae</taxon>
        <taxon>Ovis</taxon>
    </lineage>
</organism>
<gene>
    <name type="primary">CAPN3</name>
    <name type="synonym">NCL1</name>
</gene>
<protein>
    <recommendedName>
        <fullName>Calpain-3</fullName>
        <ecNumber>3.4.22.54</ecNumber>
    </recommendedName>
    <alternativeName>
        <fullName>Calcium-activated neutral proteinase 3</fullName>
        <shortName>CANP 3</shortName>
    </alternativeName>
    <alternativeName>
        <fullName>Calpain L3</fullName>
    </alternativeName>
    <alternativeName>
        <fullName>Calpain p94</fullName>
    </alternativeName>
    <alternativeName>
        <fullName>Muscle-specific calcium-activated neutral protease 3</fullName>
    </alternativeName>
    <alternativeName>
        <fullName>New calpain 1</fullName>
        <shortName>nCL-1</shortName>
    </alternativeName>
</protein>
<sequence>MPTVISASVAPRTGAEPRSPGPIAQAAQGKGTEAGGGNPSGIYSAIISRNFPIIGVKEKTFEQLHRKCLEKKVLFVDPEFPPDETSLFYSQKFPIQFIWKRPPEICENPRFIIGGANRTDICQGDLGDCWFLAAIACLTLNERLLFRVIPHDQSFTENYAGIFHFQFWRYGDWVDVVIDDCLPTYNNQLVFTKSNHRNEFWSALLEKAYAKLHGSYEALKAGNTTEGMEDFTGELTEFFEIKDAPRDMYKIMKKAIERGSLMGCSIDDGTNMTYGTSPSGLKMGELIERMVRNMDNSRLRDSDLIPEGCSDDRPTRTIVPVQYETRMACGLVKGHAYSVTGLEEALYKGEKVKLVRLRNPWGQVEWNGSWSDSWKDWSYVDKDEKARLQHQVTEDGEFWMSYDDFIYHFTKLEICNLTADALESDKLQTWTVSVNEGRWVRGCSAGGCRNFPDTFWTNPQYRLKLLEEDDDPDDSEVICSFLVALMQKNRRKDRKLGANLFTIGFAIYEVPKEMHGNKQHLQKDFFLYNASKARSRTYINMREVSERFRLPPSEYVIVPSTYEPHQEGEFILRVFSEKRNLSEEVENTISVDRPVKKKKPKPIIFGSDRANSNKELGVDQESEEGKDNTSPDKQAKSPQLKPGNIDQESKEQRQFRNIFRQIAGDDMEICADELKNVLNRVVNKHKDLKTQGFTLESCRSMIALMDTDGSGRLNLQEFHHLWKKIKTWQKIFKHYDTDQSGTINSYEMRNAVNDAGFHLNNQLYDIITMRYADKYMNIDFDSFICCFVRLEGMFRAFNAFDKDGDGIIKLNVLEWLQLTMYA</sequence>
<comment type="function">
    <text evidence="1">Calcium-regulated non-lysosomal thiol-protease. Proteolytically cleaves CTBP1. Mediates, with UTP25, the proteasome-independent degradation of p53/TP53.</text>
</comment>
<comment type="catalytic activity">
    <reaction>
        <text>Broad endopeptidase activity.</text>
        <dbReference type="EC" id="3.4.22.54"/>
    </reaction>
</comment>
<comment type="activity regulation">
    <text>Activated by micromolar concentrations of calcium and inhibited by calpastatin.</text>
</comment>
<comment type="subunit">
    <text evidence="1">Homodimer; via EF-hand domain 4. Interacts with TTN/titin. Interacts with CMYA5; this interaction, which results in CMYA5 proteolysis, may protect CAPN3 from autolysis. Interacts with SIMC1. Interacts with UTP25; the interaction is required for CAPN3 translocation to the nucleolus.</text>
</comment>
<comment type="subcellular location">
    <subcellularLocation>
        <location evidence="1">Cytoplasm</location>
    </subcellularLocation>
    <subcellularLocation>
        <location evidence="1">Nucleus</location>
        <location evidence="1">Nucleolus</location>
    </subcellularLocation>
</comment>
<comment type="tissue specificity">
    <text>Skeletal muscle.</text>
</comment>
<comment type="similarity">
    <text evidence="5">Belongs to the peptidase C2 family.</text>
</comment>
<dbReference type="EC" id="3.4.22.54"/>
<dbReference type="EMBL" id="AF087570">
    <property type="protein sequence ID" value="AAF23262.1"/>
    <property type="molecule type" value="mRNA"/>
</dbReference>
<dbReference type="EMBL" id="AF115745">
    <property type="protein sequence ID" value="AAD05334.1"/>
    <property type="molecule type" value="mRNA"/>
</dbReference>
<dbReference type="RefSeq" id="NP_001009212.1">
    <property type="nucleotide sequence ID" value="NM_001009212.1"/>
</dbReference>
<dbReference type="SMR" id="Q9TTH8"/>
<dbReference type="STRING" id="9940.ENSOARP00000022059"/>
<dbReference type="MEROPS" id="C02.004"/>
<dbReference type="PaxDb" id="9940-ENSOARP00000022059"/>
<dbReference type="GeneID" id="443038"/>
<dbReference type="KEGG" id="oas:443038"/>
<dbReference type="CTD" id="825"/>
<dbReference type="eggNOG" id="KOG0045">
    <property type="taxonomic scope" value="Eukaryota"/>
</dbReference>
<dbReference type="OrthoDB" id="424753at2759"/>
<dbReference type="BRENDA" id="3.4.22.54">
    <property type="organism ID" value="2668"/>
</dbReference>
<dbReference type="Proteomes" id="UP000002356">
    <property type="component" value="Unplaced"/>
</dbReference>
<dbReference type="GO" id="GO:0005737">
    <property type="term" value="C:cytoplasm"/>
    <property type="evidence" value="ECO:0000250"/>
    <property type="project" value="UniProtKB"/>
</dbReference>
<dbReference type="GO" id="GO:0005829">
    <property type="term" value="C:cytosol"/>
    <property type="evidence" value="ECO:0000250"/>
    <property type="project" value="UniProtKB"/>
</dbReference>
<dbReference type="GO" id="GO:0030016">
    <property type="term" value="C:myofibril"/>
    <property type="evidence" value="ECO:0000250"/>
    <property type="project" value="UniProtKB"/>
</dbReference>
<dbReference type="GO" id="GO:0005730">
    <property type="term" value="C:nucleolus"/>
    <property type="evidence" value="ECO:0000250"/>
    <property type="project" value="UniProtKB"/>
</dbReference>
<dbReference type="GO" id="GO:0005634">
    <property type="term" value="C:nucleus"/>
    <property type="evidence" value="ECO:0000250"/>
    <property type="project" value="UniProtKB"/>
</dbReference>
<dbReference type="GO" id="GO:0005886">
    <property type="term" value="C:plasma membrane"/>
    <property type="evidence" value="ECO:0000250"/>
    <property type="project" value="UniProtKB"/>
</dbReference>
<dbReference type="GO" id="GO:0032991">
    <property type="term" value="C:protein-containing complex"/>
    <property type="evidence" value="ECO:0000250"/>
    <property type="project" value="UniProtKB"/>
</dbReference>
<dbReference type="GO" id="GO:0030315">
    <property type="term" value="C:T-tubule"/>
    <property type="evidence" value="ECO:0000250"/>
    <property type="project" value="UniProtKB"/>
</dbReference>
<dbReference type="GO" id="GO:0030018">
    <property type="term" value="C:Z disc"/>
    <property type="evidence" value="ECO:0000250"/>
    <property type="project" value="UniProtKB"/>
</dbReference>
<dbReference type="GO" id="GO:0005509">
    <property type="term" value="F:calcium ion binding"/>
    <property type="evidence" value="ECO:0000250"/>
    <property type="project" value="UniProtKB"/>
</dbReference>
<dbReference type="GO" id="GO:0004198">
    <property type="term" value="F:calcium-dependent cysteine-type endopeptidase activity"/>
    <property type="evidence" value="ECO:0000250"/>
    <property type="project" value="UniProtKB"/>
</dbReference>
<dbReference type="GO" id="GO:0003824">
    <property type="term" value="F:catalytic activity"/>
    <property type="evidence" value="ECO:0000250"/>
    <property type="project" value="UniProtKB"/>
</dbReference>
<dbReference type="GO" id="GO:0055103">
    <property type="term" value="F:ligase regulator activity"/>
    <property type="evidence" value="ECO:0000250"/>
    <property type="project" value="UniProtKB"/>
</dbReference>
<dbReference type="GO" id="GO:0060090">
    <property type="term" value="F:molecular adaptor activity"/>
    <property type="evidence" value="ECO:0000250"/>
    <property type="project" value="UniProtKB"/>
</dbReference>
<dbReference type="GO" id="GO:0008233">
    <property type="term" value="F:peptidase activity"/>
    <property type="evidence" value="ECO:0000250"/>
    <property type="project" value="UniProtKB"/>
</dbReference>
<dbReference type="GO" id="GO:0031402">
    <property type="term" value="F:sodium ion binding"/>
    <property type="evidence" value="ECO:0000250"/>
    <property type="project" value="UniProtKB"/>
</dbReference>
<dbReference type="GO" id="GO:0008307">
    <property type="term" value="F:structural constituent of muscle"/>
    <property type="evidence" value="ECO:0000250"/>
    <property type="project" value="UniProtKB"/>
</dbReference>
<dbReference type="GO" id="GO:0031432">
    <property type="term" value="F:titin binding"/>
    <property type="evidence" value="ECO:0000250"/>
    <property type="project" value="UniProtKB"/>
</dbReference>
<dbReference type="GO" id="GO:1990092">
    <property type="term" value="P:calcium-dependent self proteolysis"/>
    <property type="evidence" value="ECO:0000250"/>
    <property type="project" value="UniProtKB"/>
</dbReference>
<dbReference type="GO" id="GO:0071277">
    <property type="term" value="P:cellular response to calcium ion"/>
    <property type="evidence" value="ECO:0000250"/>
    <property type="project" value="UniProtKB"/>
</dbReference>
<dbReference type="GO" id="GO:0071472">
    <property type="term" value="P:cellular response to salt stress"/>
    <property type="evidence" value="ECO:0000250"/>
    <property type="project" value="UniProtKB"/>
</dbReference>
<dbReference type="GO" id="GO:0061061">
    <property type="term" value="P:muscle structure development"/>
    <property type="evidence" value="ECO:0000250"/>
    <property type="project" value="UniProtKB"/>
</dbReference>
<dbReference type="GO" id="GO:0030239">
    <property type="term" value="P:myofibril assembly"/>
    <property type="evidence" value="ECO:0000250"/>
    <property type="project" value="UniProtKB"/>
</dbReference>
<dbReference type="GO" id="GO:0043066">
    <property type="term" value="P:negative regulation of apoptotic process"/>
    <property type="evidence" value="ECO:0000250"/>
    <property type="project" value="UniProtKB"/>
</dbReference>
<dbReference type="GO" id="GO:0045892">
    <property type="term" value="P:negative regulation of DNA-templated transcription"/>
    <property type="evidence" value="ECO:0000250"/>
    <property type="project" value="UniProtKB"/>
</dbReference>
<dbReference type="GO" id="GO:0033234">
    <property type="term" value="P:negative regulation of protein sumoylation"/>
    <property type="evidence" value="ECO:0000250"/>
    <property type="project" value="UniProtKB"/>
</dbReference>
<dbReference type="GO" id="GO:0045893">
    <property type="term" value="P:positive regulation of DNA-templated transcription"/>
    <property type="evidence" value="ECO:0000250"/>
    <property type="project" value="UniProtKB"/>
</dbReference>
<dbReference type="GO" id="GO:0045862">
    <property type="term" value="P:positive regulation of proteolysis"/>
    <property type="evidence" value="ECO:0000250"/>
    <property type="project" value="UniProtKB"/>
</dbReference>
<dbReference type="GO" id="GO:0051281">
    <property type="term" value="P:positive regulation of release of sequestered calcium ion into cytosol"/>
    <property type="evidence" value="ECO:0000250"/>
    <property type="project" value="UniProtKB"/>
</dbReference>
<dbReference type="GO" id="GO:0014718">
    <property type="term" value="P:positive regulation of satellite cell activation involved in skeletal muscle regeneration"/>
    <property type="evidence" value="ECO:0000250"/>
    <property type="project" value="UniProtKB"/>
</dbReference>
<dbReference type="GO" id="GO:0030163">
    <property type="term" value="P:protein catabolic process"/>
    <property type="evidence" value="ECO:0000250"/>
    <property type="project" value="UniProtKB"/>
</dbReference>
<dbReference type="GO" id="GO:0072657">
    <property type="term" value="P:protein localization to membrane"/>
    <property type="evidence" value="ECO:0000250"/>
    <property type="project" value="UniProtKB"/>
</dbReference>
<dbReference type="GO" id="GO:0065003">
    <property type="term" value="P:protein-containing complex assembly"/>
    <property type="evidence" value="ECO:0000250"/>
    <property type="project" value="UniProtKB"/>
</dbReference>
<dbReference type="GO" id="GO:0006508">
    <property type="term" value="P:proteolysis"/>
    <property type="evidence" value="ECO:0000250"/>
    <property type="project" value="UniProtKB"/>
</dbReference>
<dbReference type="GO" id="GO:0043122">
    <property type="term" value="P:regulation of canonical NF-kappaB signal transduction"/>
    <property type="evidence" value="ECO:0000250"/>
    <property type="project" value="UniProtKB"/>
</dbReference>
<dbReference type="GO" id="GO:0051592">
    <property type="term" value="P:response to calcium ion"/>
    <property type="evidence" value="ECO:0000250"/>
    <property type="project" value="UniProtKB"/>
</dbReference>
<dbReference type="GO" id="GO:0014850">
    <property type="term" value="P:response to muscle activity"/>
    <property type="evidence" value="ECO:0000250"/>
    <property type="project" value="UniProtKB"/>
</dbReference>
<dbReference type="GO" id="GO:0045214">
    <property type="term" value="P:sarcomere organization"/>
    <property type="evidence" value="ECO:0000250"/>
    <property type="project" value="UniProtKB"/>
</dbReference>
<dbReference type="GO" id="GO:0097264">
    <property type="term" value="P:self proteolysis"/>
    <property type="evidence" value="ECO:0000250"/>
    <property type="project" value="UniProtKB"/>
</dbReference>
<dbReference type="CDD" id="cd00214">
    <property type="entry name" value="Calpain_III"/>
    <property type="match status" value="1"/>
</dbReference>
<dbReference type="CDD" id="cd00044">
    <property type="entry name" value="CysPc"/>
    <property type="match status" value="1"/>
</dbReference>
<dbReference type="CDD" id="cd16190">
    <property type="entry name" value="EFh_PEF_CAPN3"/>
    <property type="match status" value="1"/>
</dbReference>
<dbReference type="FunFam" id="3.90.70.10:FF:000555">
    <property type="entry name" value="Calpain-3"/>
    <property type="match status" value="1"/>
</dbReference>
<dbReference type="FunFam" id="1.10.238.10:FF:000065">
    <property type="entry name" value="calpain-3 isoform X1"/>
    <property type="match status" value="1"/>
</dbReference>
<dbReference type="FunFam" id="2.60.120.380:FF:000002">
    <property type="entry name" value="calpain-3 isoform X1"/>
    <property type="match status" value="1"/>
</dbReference>
<dbReference type="Gene3D" id="2.60.120.380">
    <property type="match status" value="1"/>
</dbReference>
<dbReference type="Gene3D" id="3.90.70.10">
    <property type="entry name" value="Cysteine proteinases"/>
    <property type="match status" value="1"/>
</dbReference>
<dbReference type="Gene3D" id="1.10.238.10">
    <property type="entry name" value="EF-hand"/>
    <property type="match status" value="1"/>
</dbReference>
<dbReference type="InterPro" id="IPR033883">
    <property type="entry name" value="C2_III"/>
</dbReference>
<dbReference type="InterPro" id="IPR022684">
    <property type="entry name" value="Calpain_cysteine_protease"/>
</dbReference>
<dbReference type="InterPro" id="IPR022682">
    <property type="entry name" value="Calpain_domain_III"/>
</dbReference>
<dbReference type="InterPro" id="IPR022683">
    <property type="entry name" value="Calpain_III"/>
</dbReference>
<dbReference type="InterPro" id="IPR036213">
    <property type="entry name" value="Calpain_III_sf"/>
</dbReference>
<dbReference type="InterPro" id="IPR054069">
    <property type="entry name" value="CAPN3/13-like_C_EFh"/>
</dbReference>
<dbReference type="InterPro" id="IPR029531">
    <property type="entry name" value="CAPN3_PEF"/>
</dbReference>
<dbReference type="InterPro" id="IPR011992">
    <property type="entry name" value="EF-hand-dom_pair"/>
</dbReference>
<dbReference type="InterPro" id="IPR018247">
    <property type="entry name" value="EF_Hand_1_Ca_BS"/>
</dbReference>
<dbReference type="InterPro" id="IPR002048">
    <property type="entry name" value="EF_hand_dom"/>
</dbReference>
<dbReference type="InterPro" id="IPR038765">
    <property type="entry name" value="Papain-like_cys_pep_sf"/>
</dbReference>
<dbReference type="InterPro" id="IPR000169">
    <property type="entry name" value="Pept_cys_AS"/>
</dbReference>
<dbReference type="InterPro" id="IPR001300">
    <property type="entry name" value="Peptidase_C2_calpain_cat"/>
</dbReference>
<dbReference type="PANTHER" id="PTHR10183">
    <property type="entry name" value="CALPAIN"/>
    <property type="match status" value="1"/>
</dbReference>
<dbReference type="PANTHER" id="PTHR10183:SF329">
    <property type="entry name" value="CALPAIN-3"/>
    <property type="match status" value="1"/>
</dbReference>
<dbReference type="Pfam" id="PF01067">
    <property type="entry name" value="Calpain_III"/>
    <property type="match status" value="1"/>
</dbReference>
<dbReference type="Pfam" id="PF16648">
    <property type="entry name" value="Calpain_u2"/>
    <property type="match status" value="1"/>
</dbReference>
<dbReference type="Pfam" id="PF21875">
    <property type="entry name" value="CAPN13-like_C_EFh"/>
    <property type="match status" value="1"/>
</dbReference>
<dbReference type="Pfam" id="PF13833">
    <property type="entry name" value="EF-hand_8"/>
    <property type="match status" value="1"/>
</dbReference>
<dbReference type="Pfam" id="PF00648">
    <property type="entry name" value="Peptidase_C2"/>
    <property type="match status" value="1"/>
</dbReference>
<dbReference type="PRINTS" id="PR00704">
    <property type="entry name" value="CALPAIN"/>
</dbReference>
<dbReference type="SMART" id="SM00720">
    <property type="entry name" value="calpain_III"/>
    <property type="match status" value="1"/>
</dbReference>
<dbReference type="SMART" id="SM00230">
    <property type="entry name" value="CysPc"/>
    <property type="match status" value="1"/>
</dbReference>
<dbReference type="SMART" id="SM00054">
    <property type="entry name" value="EFh"/>
    <property type="match status" value="3"/>
</dbReference>
<dbReference type="SUPFAM" id="SSF49758">
    <property type="entry name" value="Calpain large subunit, middle domain (domain III)"/>
    <property type="match status" value="1"/>
</dbReference>
<dbReference type="SUPFAM" id="SSF54001">
    <property type="entry name" value="Cysteine proteinases"/>
    <property type="match status" value="1"/>
</dbReference>
<dbReference type="SUPFAM" id="SSF47473">
    <property type="entry name" value="EF-hand"/>
    <property type="match status" value="1"/>
</dbReference>
<dbReference type="PROSITE" id="PS50203">
    <property type="entry name" value="CALPAIN_CAT"/>
    <property type="match status" value="1"/>
</dbReference>
<dbReference type="PROSITE" id="PS00018">
    <property type="entry name" value="EF_HAND_1"/>
    <property type="match status" value="2"/>
</dbReference>
<dbReference type="PROSITE" id="PS50222">
    <property type="entry name" value="EF_HAND_2"/>
    <property type="match status" value="4"/>
</dbReference>
<dbReference type="PROSITE" id="PS00139">
    <property type="entry name" value="THIOL_PROTEASE_CYS"/>
    <property type="match status" value="1"/>
</dbReference>
<evidence type="ECO:0000250" key="1">
    <source>
        <dbReference type="UniProtKB" id="P20807"/>
    </source>
</evidence>
<evidence type="ECO:0000255" key="2">
    <source>
        <dbReference type="PROSITE-ProRule" id="PRU00239"/>
    </source>
</evidence>
<evidence type="ECO:0000255" key="3">
    <source>
        <dbReference type="PROSITE-ProRule" id="PRU00448"/>
    </source>
</evidence>
<evidence type="ECO:0000256" key="4">
    <source>
        <dbReference type="SAM" id="MobiDB-lite"/>
    </source>
</evidence>
<evidence type="ECO:0000305" key="5"/>
<reference key="1">
    <citation type="journal article" date="1999" name="Anim. Genet.">
        <title>Molecular cloning and mapping of the bovine and ovine skeletal muscle-specific calpains.</title>
        <authorList>
            <person name="Nonneman D."/>
            <person name="Koohmaraie M."/>
        </authorList>
    </citation>
    <scope>NUCLEOTIDE SEQUENCE [MRNA]</scope>
    <source>
        <tissue>Skeletal muscle</tissue>
    </source>
</reference>
<reference key="2">
    <citation type="journal article" date="2001" name="J. Anim. Sci.">
        <title>Intermuscular variation in tenderness: association with the ubiquitous and muscle-specific calpains.</title>
        <authorList>
            <person name="Ilian M.A."/>
            <person name="Morton J.D."/>
            <person name="Kent M.P."/>
            <person name="Le Couteur C.E."/>
            <person name="Hickford J."/>
            <person name="Cowley R."/>
            <person name="Bickerstaffe R."/>
        </authorList>
    </citation>
    <scope>NUCLEOTIDE SEQUENCE [MRNA] OF 288-605</scope>
</reference>
<proteinExistence type="evidence at transcript level"/>
<keyword id="KW-0106">Calcium</keyword>
<keyword id="KW-0963">Cytoplasm</keyword>
<keyword id="KW-0378">Hydrolase</keyword>
<keyword id="KW-0479">Metal-binding</keyword>
<keyword id="KW-0539">Nucleus</keyword>
<keyword id="KW-0645">Protease</keyword>
<keyword id="KW-1185">Reference proteome</keyword>
<keyword id="KW-0677">Repeat</keyword>
<keyword id="KW-0788">Thiol protease</keyword>
<feature type="chain" id="PRO_0000207711" description="Calpain-3">
    <location>
        <begin position="1"/>
        <end position="822"/>
    </location>
</feature>
<feature type="domain" description="Calpain catalytic" evidence="2">
    <location>
        <begin position="74"/>
        <end position="418"/>
    </location>
</feature>
<feature type="domain" description="EF-hand 1" evidence="3">
    <location>
        <begin position="650"/>
        <end position="684"/>
    </location>
</feature>
<feature type="domain" description="EF-hand 2" evidence="3">
    <location>
        <begin position="693"/>
        <end position="726"/>
    </location>
</feature>
<feature type="domain" description="EF-hand 3" evidence="3">
    <location>
        <begin position="723"/>
        <end position="758"/>
    </location>
</feature>
<feature type="domain" description="EF-hand 4" evidence="3">
    <location>
        <begin position="788"/>
        <end position="822"/>
    </location>
</feature>
<feature type="region of interest" description="Disordered" evidence="4">
    <location>
        <begin position="1"/>
        <end position="36"/>
    </location>
</feature>
<feature type="region of interest" description="Domain III">
    <location>
        <begin position="419"/>
        <end position="587"/>
    </location>
</feature>
<feature type="region of interest" description="Linker">
    <location>
        <begin position="588"/>
        <end position="649"/>
    </location>
</feature>
<feature type="region of interest" description="Disordered" evidence="4">
    <location>
        <begin position="600"/>
        <end position="651"/>
    </location>
</feature>
<feature type="region of interest" description="Domain IV">
    <location>
        <begin position="650"/>
        <end position="822"/>
    </location>
</feature>
<feature type="compositionally biased region" description="Basic and acidic residues" evidence="4">
    <location>
        <begin position="623"/>
        <end position="635"/>
    </location>
</feature>
<feature type="active site" evidence="2">
    <location>
        <position position="129"/>
    </location>
</feature>
<feature type="active site" evidence="2">
    <location>
        <position position="335"/>
    </location>
</feature>
<feature type="active site" evidence="2">
    <location>
        <position position="359"/>
    </location>
</feature>
<feature type="binding site" evidence="1">
    <location>
        <position position="663"/>
    </location>
    <ligand>
        <name>Ca(2+)</name>
        <dbReference type="ChEBI" id="CHEBI:29108"/>
        <label>1</label>
    </ligand>
</feature>
<feature type="binding site" evidence="1">
    <location>
        <position position="666"/>
    </location>
    <ligand>
        <name>Ca(2+)</name>
        <dbReference type="ChEBI" id="CHEBI:29108"/>
        <label>1</label>
    </ligand>
</feature>
<feature type="binding site" evidence="1">
    <location>
        <position position="668"/>
    </location>
    <ligand>
        <name>Ca(2+)</name>
        <dbReference type="ChEBI" id="CHEBI:29108"/>
        <label>1</label>
    </ligand>
</feature>
<feature type="binding site" evidence="1">
    <location>
        <position position="673"/>
    </location>
    <ligand>
        <name>Ca(2+)</name>
        <dbReference type="ChEBI" id="CHEBI:29108"/>
        <label>1</label>
    </ligand>
</feature>
<feature type="binding site" evidence="3">
    <location>
        <position position="706"/>
    </location>
    <ligand>
        <name>Ca(2+)</name>
        <dbReference type="ChEBI" id="CHEBI:29108"/>
        <label>2</label>
    </ligand>
</feature>
<feature type="binding site" evidence="3">
    <location>
        <position position="708"/>
    </location>
    <ligand>
        <name>Ca(2+)</name>
        <dbReference type="ChEBI" id="CHEBI:29108"/>
        <label>2</label>
    </ligand>
</feature>
<feature type="binding site" evidence="3">
    <location>
        <position position="710"/>
    </location>
    <ligand>
        <name>Ca(2+)</name>
        <dbReference type="ChEBI" id="CHEBI:29108"/>
        <label>2</label>
    </ligand>
</feature>
<feature type="binding site" evidence="3">
    <location>
        <position position="712"/>
    </location>
    <ligand>
        <name>Ca(2+)</name>
        <dbReference type="ChEBI" id="CHEBI:29108"/>
        <label>2</label>
    </ligand>
</feature>
<feature type="binding site" evidence="3">
    <location>
        <position position="717"/>
    </location>
    <ligand>
        <name>Ca(2+)</name>
        <dbReference type="ChEBI" id="CHEBI:29108"/>
        <label>2</label>
    </ligand>
</feature>
<feature type="binding site" evidence="3">
    <location>
        <position position="736"/>
    </location>
    <ligand>
        <name>Ca(2+)</name>
        <dbReference type="ChEBI" id="CHEBI:29108"/>
        <label>3</label>
    </ligand>
</feature>
<feature type="binding site" evidence="3">
    <location>
        <position position="738"/>
    </location>
    <ligand>
        <name>Ca(2+)</name>
        <dbReference type="ChEBI" id="CHEBI:29108"/>
        <label>3</label>
    </ligand>
</feature>
<feature type="binding site" evidence="3">
    <location>
        <position position="740"/>
    </location>
    <ligand>
        <name>Ca(2+)</name>
        <dbReference type="ChEBI" id="CHEBI:29108"/>
        <label>3</label>
    </ligand>
</feature>
<feature type="binding site" evidence="3">
    <location>
        <position position="742"/>
    </location>
    <ligand>
        <name>Ca(2+)</name>
        <dbReference type="ChEBI" id="CHEBI:29108"/>
        <label>3</label>
    </ligand>
</feature>
<feature type="binding site" evidence="3">
    <location>
        <position position="747"/>
    </location>
    <ligand>
        <name>Ca(2+)</name>
        <dbReference type="ChEBI" id="CHEBI:29108"/>
        <label>3</label>
    </ligand>
</feature>
<feature type="binding site" evidence="1">
    <location>
        <position position="801"/>
    </location>
    <ligand>
        <name>Ca(2+)</name>
        <dbReference type="ChEBI" id="CHEBI:29108"/>
        <label>4</label>
    </ligand>
</feature>
<feature type="binding site" evidence="1">
    <location>
        <position position="803"/>
    </location>
    <ligand>
        <name>Ca(2+)</name>
        <dbReference type="ChEBI" id="CHEBI:29108"/>
        <label>4</label>
    </ligand>
</feature>
<feature type="binding site" evidence="1">
    <location>
        <position position="805"/>
    </location>
    <ligand>
        <name>Ca(2+)</name>
        <dbReference type="ChEBI" id="CHEBI:29108"/>
        <label>4</label>
    </ligand>
</feature>
<feature type="binding site" evidence="1">
    <location>
        <position position="807"/>
    </location>
    <ligand>
        <name>Ca(2+)</name>
        <dbReference type="ChEBI" id="CHEBI:29108"/>
        <label>4</label>
    </ligand>
</feature>
<feature type="sequence conflict" description="In Ref. 2; AAD05334." evidence="5" ref="2">
    <original>G</original>
    <variation>A</variation>
    <location>
        <position position="437"/>
    </location>
</feature>